<protein>
    <recommendedName>
        <fullName>Hemoglobin subunit gamma</fullName>
    </recommendedName>
    <alternativeName>
        <fullName>Gamma-globin</fullName>
    </alternativeName>
    <alternativeName>
        <fullName>Hemoglobin gamma chain</fullName>
    </alternativeName>
</protein>
<reference key="1">
    <citation type="submission" date="2005-06" db="EMBL/GenBank/DDBJ databases">
        <title>Atypical molecular evolution of afrotherian and xenarthran beta-globin cluster genes.</title>
        <authorList>
            <person name="Sloan A.M."/>
            <person name="Campbell K.L."/>
        </authorList>
    </citation>
    <scope>NUCLEOTIDE SEQUENCE [GENOMIC DNA]</scope>
</reference>
<dbReference type="EMBL" id="DQ091216">
    <property type="protein sequence ID" value="AAZ22687.1"/>
    <property type="molecule type" value="Genomic_DNA"/>
</dbReference>
<dbReference type="SMR" id="Q45XH7"/>
<dbReference type="GO" id="GO:0072562">
    <property type="term" value="C:blood microparticle"/>
    <property type="evidence" value="ECO:0007669"/>
    <property type="project" value="TreeGrafter"/>
</dbReference>
<dbReference type="GO" id="GO:0031838">
    <property type="term" value="C:haptoglobin-hemoglobin complex"/>
    <property type="evidence" value="ECO:0007669"/>
    <property type="project" value="TreeGrafter"/>
</dbReference>
<dbReference type="GO" id="GO:0005833">
    <property type="term" value="C:hemoglobin complex"/>
    <property type="evidence" value="ECO:0007669"/>
    <property type="project" value="InterPro"/>
</dbReference>
<dbReference type="GO" id="GO:0031720">
    <property type="term" value="F:haptoglobin binding"/>
    <property type="evidence" value="ECO:0007669"/>
    <property type="project" value="TreeGrafter"/>
</dbReference>
<dbReference type="GO" id="GO:0020037">
    <property type="term" value="F:heme binding"/>
    <property type="evidence" value="ECO:0007669"/>
    <property type="project" value="InterPro"/>
</dbReference>
<dbReference type="GO" id="GO:0046872">
    <property type="term" value="F:metal ion binding"/>
    <property type="evidence" value="ECO:0007669"/>
    <property type="project" value="UniProtKB-KW"/>
</dbReference>
<dbReference type="GO" id="GO:0043177">
    <property type="term" value="F:organic acid binding"/>
    <property type="evidence" value="ECO:0007669"/>
    <property type="project" value="TreeGrafter"/>
</dbReference>
<dbReference type="GO" id="GO:0019825">
    <property type="term" value="F:oxygen binding"/>
    <property type="evidence" value="ECO:0007669"/>
    <property type="project" value="InterPro"/>
</dbReference>
<dbReference type="GO" id="GO:0005344">
    <property type="term" value="F:oxygen carrier activity"/>
    <property type="evidence" value="ECO:0007669"/>
    <property type="project" value="UniProtKB-KW"/>
</dbReference>
<dbReference type="GO" id="GO:0004601">
    <property type="term" value="F:peroxidase activity"/>
    <property type="evidence" value="ECO:0007669"/>
    <property type="project" value="TreeGrafter"/>
</dbReference>
<dbReference type="GO" id="GO:0042744">
    <property type="term" value="P:hydrogen peroxide catabolic process"/>
    <property type="evidence" value="ECO:0007669"/>
    <property type="project" value="TreeGrafter"/>
</dbReference>
<dbReference type="CDD" id="cd08925">
    <property type="entry name" value="Hb-beta-like"/>
    <property type="match status" value="1"/>
</dbReference>
<dbReference type="FunFam" id="1.10.490.10:FF:000001">
    <property type="entry name" value="Hemoglobin subunit beta"/>
    <property type="match status" value="1"/>
</dbReference>
<dbReference type="Gene3D" id="1.10.490.10">
    <property type="entry name" value="Globins"/>
    <property type="match status" value="1"/>
</dbReference>
<dbReference type="InterPro" id="IPR000971">
    <property type="entry name" value="Globin"/>
</dbReference>
<dbReference type="InterPro" id="IPR009050">
    <property type="entry name" value="Globin-like_sf"/>
</dbReference>
<dbReference type="InterPro" id="IPR012292">
    <property type="entry name" value="Globin/Proto"/>
</dbReference>
<dbReference type="InterPro" id="IPR002337">
    <property type="entry name" value="Hemoglobin_b"/>
</dbReference>
<dbReference type="InterPro" id="IPR050056">
    <property type="entry name" value="Hemoglobin_oxygen_transport"/>
</dbReference>
<dbReference type="PANTHER" id="PTHR11442">
    <property type="entry name" value="HEMOGLOBIN FAMILY MEMBER"/>
    <property type="match status" value="1"/>
</dbReference>
<dbReference type="PANTHER" id="PTHR11442:SF7">
    <property type="entry name" value="HEMOGLOBIN SUBUNIT EPSILON"/>
    <property type="match status" value="1"/>
</dbReference>
<dbReference type="Pfam" id="PF00042">
    <property type="entry name" value="Globin"/>
    <property type="match status" value="1"/>
</dbReference>
<dbReference type="PRINTS" id="PR00814">
    <property type="entry name" value="BETAHAEM"/>
</dbReference>
<dbReference type="SUPFAM" id="SSF46458">
    <property type="entry name" value="Globin-like"/>
    <property type="match status" value="1"/>
</dbReference>
<dbReference type="PROSITE" id="PS01033">
    <property type="entry name" value="GLOBIN"/>
    <property type="match status" value="1"/>
</dbReference>
<name>HBG_ELEMA</name>
<keyword id="KW-0349">Heme</keyword>
<keyword id="KW-0408">Iron</keyword>
<keyword id="KW-0479">Metal-binding</keyword>
<keyword id="KW-0561">Oxygen transport</keyword>
<keyword id="KW-0813">Transport</keyword>
<accession>Q45XH7</accession>
<evidence type="ECO:0000255" key="1">
    <source>
        <dbReference type="PROSITE-ProRule" id="PRU00238"/>
    </source>
</evidence>
<feature type="chain" id="PRO_0000053248" description="Hemoglobin subunit gamma">
    <location>
        <begin position="1"/>
        <end position="147"/>
    </location>
</feature>
<feature type="domain" description="Globin" evidence="1">
    <location>
        <begin position="3"/>
        <end position="147"/>
    </location>
</feature>
<feature type="binding site" description="distal binding residue" evidence="1">
    <location>
        <position position="64"/>
    </location>
    <ligand>
        <name>heme b</name>
        <dbReference type="ChEBI" id="CHEBI:60344"/>
    </ligand>
    <ligandPart>
        <name>Fe</name>
        <dbReference type="ChEBI" id="CHEBI:18248"/>
    </ligandPart>
</feature>
<feature type="binding site" description="proximal binding residue" evidence="1">
    <location>
        <position position="93"/>
    </location>
    <ligand>
        <name>heme b</name>
        <dbReference type="ChEBI" id="CHEBI:60344"/>
    </ligand>
    <ligandPart>
        <name>Fe</name>
        <dbReference type="ChEBI" id="CHEBI:18248"/>
    </ligandPart>
</feature>
<sequence>MVHFTAEEKAAITSLWGQVNVEETGGEALGRLLVVYPWTQRFFDTFGNLSSASAIMGNPRVKAHGKKVLTSFGDAVKNLDNLKGTFAKLSELHCDKLHVDPENFRLLGNVLVIVLANHFGKEFTPQVQAAWQKMVTGVANALAYKYH</sequence>
<gene>
    <name type="primary">HBG</name>
</gene>
<proteinExistence type="evidence at transcript level"/>
<organism>
    <name type="scientific">Elephas maximus</name>
    <name type="common">Indian elephant</name>
    <dbReference type="NCBI Taxonomy" id="9783"/>
    <lineage>
        <taxon>Eukaryota</taxon>
        <taxon>Metazoa</taxon>
        <taxon>Chordata</taxon>
        <taxon>Craniata</taxon>
        <taxon>Vertebrata</taxon>
        <taxon>Euteleostomi</taxon>
        <taxon>Mammalia</taxon>
        <taxon>Eutheria</taxon>
        <taxon>Afrotheria</taxon>
        <taxon>Proboscidea</taxon>
        <taxon>Elephantidae</taxon>
        <taxon>Elephas</taxon>
    </lineage>
</organism>
<comment type="function">
    <text>Gamma chains make up the fetal hemoglobin F, in combination with alpha chains.</text>
</comment>
<comment type="subunit">
    <text>Heterotetramer of two alpha chains and two gamma chains in fetal hemoglobin (Hb F).</text>
</comment>
<comment type="tissue specificity">
    <text>Red blood cells.</text>
</comment>
<comment type="similarity">
    <text evidence="1">Belongs to the globin family.</text>
</comment>